<evidence type="ECO:0000255" key="1">
    <source>
        <dbReference type="HAMAP-Rule" id="MF_00502"/>
    </source>
</evidence>
<evidence type="ECO:0000305" key="2"/>
<accession>A6LDB6</accession>
<sequence length="84" mass="9626">MKKGIHPENYRPVVFKDMSNDDVFITRSTINAKETIEIDGVTYPLVKVEISNTSHPFYTGKSKLVDTAGRVDKFMSRYGNRNKK</sequence>
<keyword id="KW-1185">Reference proteome</keyword>
<keyword id="KW-0687">Ribonucleoprotein</keyword>
<keyword id="KW-0689">Ribosomal protein</keyword>
<dbReference type="EMBL" id="CP000140">
    <property type="protein sequence ID" value="ABR43680.1"/>
    <property type="molecule type" value="Genomic_DNA"/>
</dbReference>
<dbReference type="RefSeq" id="WP_005854707.1">
    <property type="nucleotide sequence ID" value="NZ_LR215978.1"/>
</dbReference>
<dbReference type="SMR" id="A6LDB6"/>
<dbReference type="STRING" id="435591.BDI_1945"/>
<dbReference type="PaxDb" id="435591-BDI_1945"/>
<dbReference type="KEGG" id="pdi:BDI_1945"/>
<dbReference type="eggNOG" id="COG0254">
    <property type="taxonomic scope" value="Bacteria"/>
</dbReference>
<dbReference type="HOGENOM" id="CLU_114306_2_2_10"/>
<dbReference type="BioCyc" id="PDIS435591:G1G5A-1999-MONOMER"/>
<dbReference type="Proteomes" id="UP000000566">
    <property type="component" value="Chromosome"/>
</dbReference>
<dbReference type="GO" id="GO:1990904">
    <property type="term" value="C:ribonucleoprotein complex"/>
    <property type="evidence" value="ECO:0007669"/>
    <property type="project" value="UniProtKB-KW"/>
</dbReference>
<dbReference type="GO" id="GO:0005840">
    <property type="term" value="C:ribosome"/>
    <property type="evidence" value="ECO:0007669"/>
    <property type="project" value="UniProtKB-KW"/>
</dbReference>
<dbReference type="GO" id="GO:0003735">
    <property type="term" value="F:structural constituent of ribosome"/>
    <property type="evidence" value="ECO:0007669"/>
    <property type="project" value="InterPro"/>
</dbReference>
<dbReference type="GO" id="GO:0006412">
    <property type="term" value="P:translation"/>
    <property type="evidence" value="ECO:0007669"/>
    <property type="project" value="UniProtKB-UniRule"/>
</dbReference>
<dbReference type="Gene3D" id="4.10.830.30">
    <property type="entry name" value="Ribosomal protein L31"/>
    <property type="match status" value="1"/>
</dbReference>
<dbReference type="HAMAP" id="MF_00502">
    <property type="entry name" value="Ribosomal_bL31_2"/>
    <property type="match status" value="1"/>
</dbReference>
<dbReference type="InterPro" id="IPR034704">
    <property type="entry name" value="Ribosomal_bL28/bL31-like_sf"/>
</dbReference>
<dbReference type="InterPro" id="IPR002150">
    <property type="entry name" value="Ribosomal_bL31"/>
</dbReference>
<dbReference type="InterPro" id="IPR027493">
    <property type="entry name" value="Ribosomal_bL31_B"/>
</dbReference>
<dbReference type="InterPro" id="IPR042105">
    <property type="entry name" value="Ribosomal_bL31_sf"/>
</dbReference>
<dbReference type="NCBIfam" id="TIGR00105">
    <property type="entry name" value="L31"/>
    <property type="match status" value="1"/>
</dbReference>
<dbReference type="NCBIfam" id="NF002462">
    <property type="entry name" value="PRK01678.1"/>
    <property type="match status" value="1"/>
</dbReference>
<dbReference type="PANTHER" id="PTHR33280">
    <property type="entry name" value="50S RIBOSOMAL PROTEIN L31, CHLOROPLASTIC"/>
    <property type="match status" value="1"/>
</dbReference>
<dbReference type="PANTHER" id="PTHR33280:SF1">
    <property type="entry name" value="LARGE RIBOSOMAL SUBUNIT PROTEIN BL31C"/>
    <property type="match status" value="1"/>
</dbReference>
<dbReference type="Pfam" id="PF01197">
    <property type="entry name" value="Ribosomal_L31"/>
    <property type="match status" value="1"/>
</dbReference>
<dbReference type="PRINTS" id="PR01249">
    <property type="entry name" value="RIBOSOMALL31"/>
</dbReference>
<dbReference type="SUPFAM" id="SSF143800">
    <property type="entry name" value="L28p-like"/>
    <property type="match status" value="1"/>
</dbReference>
<dbReference type="PROSITE" id="PS01143">
    <property type="entry name" value="RIBOSOMAL_L31"/>
    <property type="match status" value="1"/>
</dbReference>
<reference key="1">
    <citation type="journal article" date="2007" name="PLoS Biol.">
        <title>Evolution of symbiotic bacteria in the distal human intestine.</title>
        <authorList>
            <person name="Xu J."/>
            <person name="Mahowald M.A."/>
            <person name="Ley R.E."/>
            <person name="Lozupone C.A."/>
            <person name="Hamady M."/>
            <person name="Martens E.C."/>
            <person name="Henrissat B."/>
            <person name="Coutinho P.M."/>
            <person name="Minx P."/>
            <person name="Latreille P."/>
            <person name="Cordum H."/>
            <person name="Van Brunt A."/>
            <person name="Kim K."/>
            <person name="Fulton R.S."/>
            <person name="Fulton L.A."/>
            <person name="Clifton S.W."/>
            <person name="Wilson R.K."/>
            <person name="Knight R.D."/>
            <person name="Gordon J.I."/>
        </authorList>
    </citation>
    <scope>NUCLEOTIDE SEQUENCE [LARGE SCALE GENOMIC DNA]</scope>
    <source>
        <strain>ATCC 8503 / DSM 20701 / CIP 104284 / JCM 5825 / NCTC 11152</strain>
    </source>
</reference>
<comment type="subunit">
    <text evidence="1">Part of the 50S ribosomal subunit.</text>
</comment>
<comment type="similarity">
    <text evidence="1">Belongs to the bacterial ribosomal protein bL31 family. Type B subfamily.</text>
</comment>
<name>RL31B_PARD8</name>
<proteinExistence type="inferred from homology"/>
<organism>
    <name type="scientific">Parabacteroides distasonis (strain ATCC 8503 / DSM 20701 / CIP 104284 / JCM 5825 / NCTC 11152)</name>
    <dbReference type="NCBI Taxonomy" id="435591"/>
    <lineage>
        <taxon>Bacteria</taxon>
        <taxon>Pseudomonadati</taxon>
        <taxon>Bacteroidota</taxon>
        <taxon>Bacteroidia</taxon>
        <taxon>Bacteroidales</taxon>
        <taxon>Tannerellaceae</taxon>
        <taxon>Parabacteroides</taxon>
    </lineage>
</organism>
<protein>
    <recommendedName>
        <fullName evidence="1">Large ribosomal subunit protein bL31B</fullName>
    </recommendedName>
    <alternativeName>
        <fullName evidence="2">50S ribosomal protein L31 type B</fullName>
    </alternativeName>
</protein>
<gene>
    <name evidence="1" type="primary">rpmE2</name>
    <name type="ordered locus">BDI_1945</name>
</gene>
<feature type="chain" id="PRO_1000014708" description="Large ribosomal subunit protein bL31B">
    <location>
        <begin position="1"/>
        <end position="84"/>
    </location>
</feature>